<evidence type="ECO:0000255" key="1">
    <source>
        <dbReference type="HAMAP-Rule" id="MF_00069"/>
    </source>
</evidence>
<comment type="function">
    <text evidence="1">Catalyzes the reduction of hydroxylamine to form NH(3) and H(2)O.</text>
</comment>
<comment type="catalytic activity">
    <reaction evidence="1">
        <text>A + NH4(+) + H2O = hydroxylamine + AH2 + H(+)</text>
        <dbReference type="Rhea" id="RHEA:22052"/>
        <dbReference type="ChEBI" id="CHEBI:13193"/>
        <dbReference type="ChEBI" id="CHEBI:15377"/>
        <dbReference type="ChEBI" id="CHEBI:15378"/>
        <dbReference type="ChEBI" id="CHEBI:15429"/>
        <dbReference type="ChEBI" id="CHEBI:17499"/>
        <dbReference type="ChEBI" id="CHEBI:28938"/>
        <dbReference type="EC" id="1.7.99.1"/>
    </reaction>
</comment>
<comment type="cofactor">
    <cofactor evidence="1">
        <name>[2Fe-2S] cluster</name>
        <dbReference type="ChEBI" id="CHEBI:190135"/>
    </cofactor>
    <text evidence="1">Binds 1 [2Fe-2S] cluster.</text>
</comment>
<comment type="cofactor">
    <cofactor evidence="1">
        <name>hybrid [4Fe-2O-2S] cluster</name>
        <dbReference type="ChEBI" id="CHEBI:60519"/>
    </cofactor>
    <text evidence="1">Binds 1 hybrid [4Fe-2O-2S] cluster.</text>
</comment>
<comment type="subcellular location">
    <subcellularLocation>
        <location evidence="1">Cytoplasm</location>
    </subcellularLocation>
</comment>
<comment type="similarity">
    <text evidence="1">Belongs to the HCP family.</text>
</comment>
<keyword id="KW-0001">2Fe-2S</keyword>
<keyword id="KW-0963">Cytoplasm</keyword>
<keyword id="KW-0408">Iron</keyword>
<keyword id="KW-0411">Iron-sulfur</keyword>
<keyword id="KW-0479">Metal-binding</keyword>
<keyword id="KW-0560">Oxidoreductase</keyword>
<dbReference type="EC" id="1.7.99.1" evidence="1"/>
<dbReference type="EMBL" id="CP000266">
    <property type="protein sequence ID" value="ABF03088.1"/>
    <property type="molecule type" value="Genomic_DNA"/>
</dbReference>
<dbReference type="RefSeq" id="WP_000458816.1">
    <property type="nucleotide sequence ID" value="NC_008258.1"/>
</dbReference>
<dbReference type="SMR" id="Q0T8K8"/>
<dbReference type="KEGG" id="sfv:SFV_0861"/>
<dbReference type="HOGENOM" id="CLU_038344_2_0_6"/>
<dbReference type="Proteomes" id="UP000000659">
    <property type="component" value="Chromosome"/>
</dbReference>
<dbReference type="GO" id="GO:0005737">
    <property type="term" value="C:cytoplasm"/>
    <property type="evidence" value="ECO:0007669"/>
    <property type="project" value="UniProtKB-SubCell"/>
</dbReference>
<dbReference type="GO" id="GO:0051537">
    <property type="term" value="F:2 iron, 2 sulfur cluster binding"/>
    <property type="evidence" value="ECO:0007669"/>
    <property type="project" value="UniProtKB-KW"/>
</dbReference>
<dbReference type="GO" id="GO:0050418">
    <property type="term" value="F:hydroxylamine reductase activity"/>
    <property type="evidence" value="ECO:0007669"/>
    <property type="project" value="UniProtKB-UniRule"/>
</dbReference>
<dbReference type="GO" id="GO:0046872">
    <property type="term" value="F:metal ion binding"/>
    <property type="evidence" value="ECO:0007669"/>
    <property type="project" value="UniProtKB-KW"/>
</dbReference>
<dbReference type="GO" id="GO:0004601">
    <property type="term" value="F:peroxidase activity"/>
    <property type="evidence" value="ECO:0007669"/>
    <property type="project" value="TreeGrafter"/>
</dbReference>
<dbReference type="GO" id="GO:0042542">
    <property type="term" value="P:response to hydrogen peroxide"/>
    <property type="evidence" value="ECO:0007669"/>
    <property type="project" value="TreeGrafter"/>
</dbReference>
<dbReference type="CDD" id="cd01914">
    <property type="entry name" value="HCP"/>
    <property type="match status" value="1"/>
</dbReference>
<dbReference type="FunFam" id="1.20.1270.20:FF:000001">
    <property type="entry name" value="Hydroxylamine reductase"/>
    <property type="match status" value="1"/>
</dbReference>
<dbReference type="FunFam" id="1.20.1270.20:FF:000002">
    <property type="entry name" value="Hydroxylamine reductase"/>
    <property type="match status" value="1"/>
</dbReference>
<dbReference type="FunFam" id="3.40.50.2030:FF:000001">
    <property type="entry name" value="Hydroxylamine reductase"/>
    <property type="match status" value="1"/>
</dbReference>
<dbReference type="FunFam" id="3.40.50.2030:FF:000002">
    <property type="entry name" value="Hydroxylamine reductase"/>
    <property type="match status" value="1"/>
</dbReference>
<dbReference type="Gene3D" id="1.20.1270.20">
    <property type="match status" value="2"/>
</dbReference>
<dbReference type="Gene3D" id="3.40.50.2030">
    <property type="match status" value="2"/>
</dbReference>
<dbReference type="HAMAP" id="MF_00069">
    <property type="entry name" value="Hydroxylam_reduct"/>
    <property type="match status" value="1"/>
</dbReference>
<dbReference type="InterPro" id="IPR004137">
    <property type="entry name" value="HCP/CODH"/>
</dbReference>
<dbReference type="InterPro" id="IPR010048">
    <property type="entry name" value="Hydroxylam_reduct"/>
</dbReference>
<dbReference type="InterPro" id="IPR016099">
    <property type="entry name" value="Prismane-like_a/b-sand"/>
</dbReference>
<dbReference type="InterPro" id="IPR011254">
    <property type="entry name" value="Prismane-like_sf"/>
</dbReference>
<dbReference type="InterPro" id="IPR016100">
    <property type="entry name" value="Prismane_a-bundle"/>
</dbReference>
<dbReference type="NCBIfam" id="TIGR01703">
    <property type="entry name" value="hybrid_clust"/>
    <property type="match status" value="1"/>
</dbReference>
<dbReference type="NCBIfam" id="NF003658">
    <property type="entry name" value="PRK05290.1"/>
    <property type="match status" value="1"/>
</dbReference>
<dbReference type="PANTHER" id="PTHR30109">
    <property type="entry name" value="HYDROXYLAMINE REDUCTASE"/>
    <property type="match status" value="1"/>
</dbReference>
<dbReference type="PANTHER" id="PTHR30109:SF0">
    <property type="entry name" value="HYDROXYLAMINE REDUCTASE"/>
    <property type="match status" value="1"/>
</dbReference>
<dbReference type="Pfam" id="PF03063">
    <property type="entry name" value="Prismane"/>
    <property type="match status" value="1"/>
</dbReference>
<dbReference type="PIRSF" id="PIRSF000076">
    <property type="entry name" value="HCP"/>
    <property type="match status" value="1"/>
</dbReference>
<dbReference type="SUPFAM" id="SSF56821">
    <property type="entry name" value="Prismane protein-like"/>
    <property type="match status" value="1"/>
</dbReference>
<protein>
    <recommendedName>
        <fullName evidence="1">Hydroxylamine reductase</fullName>
        <ecNumber evidence="1">1.7.99.1</ecNumber>
    </recommendedName>
    <alternativeName>
        <fullName evidence="1">Hybrid-cluster protein</fullName>
        <shortName evidence="1">HCP</shortName>
    </alternativeName>
    <alternativeName>
        <fullName evidence="1">Prismane protein</fullName>
    </alternativeName>
</protein>
<organism>
    <name type="scientific">Shigella flexneri serotype 5b (strain 8401)</name>
    <dbReference type="NCBI Taxonomy" id="373384"/>
    <lineage>
        <taxon>Bacteria</taxon>
        <taxon>Pseudomonadati</taxon>
        <taxon>Pseudomonadota</taxon>
        <taxon>Gammaproteobacteria</taxon>
        <taxon>Enterobacterales</taxon>
        <taxon>Enterobacteriaceae</taxon>
        <taxon>Shigella</taxon>
    </lineage>
</organism>
<sequence length="550" mass="60075">MFCVQCEQTIRTPAGNGCSYAQGMCGKTAETSDLQDLLIAALQGLSAWAVKAREYGIINHDVDSFAPRAFFSTLTNVNFDSPRIVGYAREAIALREALKAQCLAVDANARVDNPMADLQLVSDDLGELQRQAAEFTPNKDKAAIGENILGLRLLCLYGLKGAAAYMEHAHVLGQYDNDIYAQYHKIMAWLGTWPADMNALLECSMEIGQMNFKVMSILDAGETGKYGHPTPTQVNVKATAGKCILISGHDLKDLYNLLEQTEGTGVNVYTHGEMLPAHGYPELRKFKHLVGNYGSGWQNQQVEFARFPGPIVMTSNCIIDPTVGAYDDRIWTRSIVGWPGVRHLDGEDFSAVIAQAQQMAGFPYSEIPHLITVGFGRQTLLGAADTLIDLVSREKLRHIFLLGGCDGARGERHYFTDFATSVPDDCLILTLACGKYRFNKLEFGDIEGLPRLVDAGQCNDAYSAIILAVTLAEKLGCGVNDLPLSLVLSWFEQKAIVILLTLLSLGVKNIVTGPTAPGFLTPDLLAVLNEKFGLRSITTVEEDMKQLLNA</sequence>
<name>HCP_SHIF8</name>
<feature type="chain" id="PRO_1000009174" description="Hydroxylamine reductase">
    <location>
        <begin position="1"/>
        <end position="550"/>
    </location>
</feature>
<feature type="binding site" evidence="1">
    <location>
        <position position="3"/>
    </location>
    <ligand>
        <name>[2Fe-2S] cluster</name>
        <dbReference type="ChEBI" id="CHEBI:190135"/>
    </ligand>
</feature>
<feature type="binding site" evidence="1">
    <location>
        <position position="6"/>
    </location>
    <ligand>
        <name>[2Fe-2S] cluster</name>
        <dbReference type="ChEBI" id="CHEBI:190135"/>
    </ligand>
</feature>
<feature type="binding site" evidence="1">
    <location>
        <position position="18"/>
    </location>
    <ligand>
        <name>[2Fe-2S] cluster</name>
        <dbReference type="ChEBI" id="CHEBI:190135"/>
    </ligand>
</feature>
<feature type="binding site" evidence="1">
    <location>
        <position position="25"/>
    </location>
    <ligand>
        <name>[2Fe-2S] cluster</name>
        <dbReference type="ChEBI" id="CHEBI:190135"/>
    </ligand>
</feature>
<feature type="binding site" evidence="1">
    <location>
        <position position="249"/>
    </location>
    <ligand>
        <name>hybrid [4Fe-2O-2S] cluster</name>
        <dbReference type="ChEBI" id="CHEBI:60519"/>
    </ligand>
</feature>
<feature type="binding site" evidence="1">
    <location>
        <position position="273"/>
    </location>
    <ligand>
        <name>hybrid [4Fe-2O-2S] cluster</name>
        <dbReference type="ChEBI" id="CHEBI:60519"/>
    </ligand>
</feature>
<feature type="binding site" evidence="1">
    <location>
        <position position="317"/>
    </location>
    <ligand>
        <name>hybrid [4Fe-2O-2S] cluster</name>
        <dbReference type="ChEBI" id="CHEBI:60519"/>
    </ligand>
</feature>
<feature type="binding site" description="via persulfide group" evidence="1">
    <location>
        <position position="405"/>
    </location>
    <ligand>
        <name>hybrid [4Fe-2O-2S] cluster</name>
        <dbReference type="ChEBI" id="CHEBI:60519"/>
    </ligand>
</feature>
<feature type="binding site" evidence="1">
    <location>
        <position position="433"/>
    </location>
    <ligand>
        <name>hybrid [4Fe-2O-2S] cluster</name>
        <dbReference type="ChEBI" id="CHEBI:60519"/>
    </ligand>
</feature>
<feature type="binding site" evidence="1">
    <location>
        <position position="458"/>
    </location>
    <ligand>
        <name>hybrid [4Fe-2O-2S] cluster</name>
        <dbReference type="ChEBI" id="CHEBI:60519"/>
    </ligand>
</feature>
<feature type="binding site" evidence="1">
    <location>
        <position position="492"/>
    </location>
    <ligand>
        <name>hybrid [4Fe-2O-2S] cluster</name>
        <dbReference type="ChEBI" id="CHEBI:60519"/>
    </ligand>
</feature>
<feature type="binding site" evidence="1">
    <location>
        <position position="494"/>
    </location>
    <ligand>
        <name>hybrid [4Fe-2O-2S] cluster</name>
        <dbReference type="ChEBI" id="CHEBI:60519"/>
    </ligand>
</feature>
<feature type="modified residue" description="Cysteine persulfide" evidence="1">
    <location>
        <position position="405"/>
    </location>
</feature>
<reference key="1">
    <citation type="journal article" date="2006" name="BMC Genomics">
        <title>Complete genome sequence of Shigella flexneri 5b and comparison with Shigella flexneri 2a.</title>
        <authorList>
            <person name="Nie H."/>
            <person name="Yang F."/>
            <person name="Zhang X."/>
            <person name="Yang J."/>
            <person name="Chen L."/>
            <person name="Wang J."/>
            <person name="Xiong Z."/>
            <person name="Peng J."/>
            <person name="Sun L."/>
            <person name="Dong J."/>
            <person name="Xue Y."/>
            <person name="Xu X."/>
            <person name="Chen S."/>
            <person name="Yao Z."/>
            <person name="Shen Y."/>
            <person name="Jin Q."/>
        </authorList>
    </citation>
    <scope>NUCLEOTIDE SEQUENCE [LARGE SCALE GENOMIC DNA]</scope>
    <source>
        <strain>8401</strain>
    </source>
</reference>
<proteinExistence type="inferred from homology"/>
<gene>
    <name evidence="1" type="primary">hcp</name>
    <name type="ordered locus">SFV_0861</name>
</gene>
<accession>Q0T8K8</accession>